<accession>O60035</accession>
<dbReference type="EMBL" id="Y17007">
    <property type="protein sequence ID" value="CAA76580.1"/>
    <property type="molecule type" value="Genomic_DNA"/>
</dbReference>
<dbReference type="CGD" id="CAL0000185877">
    <property type="gene designation" value="PDC2"/>
</dbReference>
<dbReference type="VEuPathDB" id="FungiDB:C1_09970C_A"/>
<dbReference type="VEuPathDB" id="FungiDB:CAWG_00435"/>
<dbReference type="GO" id="GO:0005634">
    <property type="term" value="C:nucleus"/>
    <property type="evidence" value="ECO:0007669"/>
    <property type="project" value="TreeGrafter"/>
</dbReference>
<dbReference type="GO" id="GO:0003677">
    <property type="term" value="F:DNA binding"/>
    <property type="evidence" value="ECO:0007669"/>
    <property type="project" value="UniProtKB-KW"/>
</dbReference>
<dbReference type="Gene3D" id="1.10.10.60">
    <property type="entry name" value="Homeodomain-like"/>
    <property type="match status" value="2"/>
</dbReference>
<dbReference type="InterPro" id="IPR050863">
    <property type="entry name" value="CenT-Element_Derived"/>
</dbReference>
<dbReference type="InterPro" id="IPR004875">
    <property type="entry name" value="DDE_SF_endonuclease_dom"/>
</dbReference>
<dbReference type="InterPro" id="IPR009057">
    <property type="entry name" value="Homeodomain-like_sf"/>
</dbReference>
<dbReference type="InterPro" id="IPR006600">
    <property type="entry name" value="HTH_CenpB_DNA-bd_dom"/>
</dbReference>
<dbReference type="PANTHER" id="PTHR19303:SF73">
    <property type="entry name" value="PROTEIN PDC2"/>
    <property type="match status" value="1"/>
</dbReference>
<dbReference type="PANTHER" id="PTHR19303">
    <property type="entry name" value="TRANSPOSON"/>
    <property type="match status" value="1"/>
</dbReference>
<dbReference type="Pfam" id="PF03184">
    <property type="entry name" value="DDE_1"/>
    <property type="match status" value="1"/>
</dbReference>
<dbReference type="Pfam" id="PF03221">
    <property type="entry name" value="HTH_Tnp_Tc5"/>
    <property type="match status" value="1"/>
</dbReference>
<dbReference type="SMART" id="SM00674">
    <property type="entry name" value="CENPB"/>
    <property type="match status" value="1"/>
</dbReference>
<dbReference type="SUPFAM" id="SSF46689">
    <property type="entry name" value="Homeodomain-like"/>
    <property type="match status" value="1"/>
</dbReference>
<dbReference type="PROSITE" id="PS51253">
    <property type="entry name" value="HTH_CENPB"/>
    <property type="match status" value="1"/>
</dbReference>
<evidence type="ECO:0000250" key="1"/>
<evidence type="ECO:0000255" key="2">
    <source>
        <dbReference type="PROSITE-ProRule" id="PRU00583"/>
    </source>
</evidence>
<evidence type="ECO:0000256" key="3">
    <source>
        <dbReference type="SAM" id="MobiDB-lite"/>
    </source>
</evidence>
<organism>
    <name type="scientific">Candida albicans</name>
    <name type="common">Yeast</name>
    <dbReference type="NCBI Taxonomy" id="5476"/>
    <lineage>
        <taxon>Eukaryota</taxon>
        <taxon>Fungi</taxon>
        <taxon>Dikarya</taxon>
        <taxon>Ascomycota</taxon>
        <taxon>Saccharomycotina</taxon>
        <taxon>Pichiomycetes</taxon>
        <taxon>Debaryomycetaceae</taxon>
        <taxon>Candida/Lodderomyces clade</taxon>
        <taxon>Candida</taxon>
    </lineage>
</organism>
<gene>
    <name type="primary">PDC2</name>
</gene>
<sequence length="836" mass="94360">MGYTIKQKIGICLKAEANPEMTQSDLALWAMKEYNSERPPSQTTISRILNSKNDIISRKESEFELIRRRKRANPLLRRILTEWITQANWEGIPITTPIIQSTANAIWTRLPKEGQEGNGIFNQKWCSHFVKKLNINITGSPRDVLDNRGYNLNKVWKLDEILELKRYLRDIIDQEDYAPQDVFVIDDFQLFYSLPLDQIFDVSSIDKGIKQSNSSAEHSLTIMLGCNIDGSEKLTPIIVGKYDKFDVSKSTHVSLNSMQFDSVSYQTLMNKLTEVYNIFYKSNTNKWITSSMFQNYLTRLDHKLSNSRPNGRKILIILDDCSSHRIINLKFNNIRLCYLKNEANHKNPYNTTYSGIKFDYLPMNFGIVEEFKILYRLQQYLEMINLQRSKSQIDSDPMIEENLTSTSVATTATALEVLSESDYHISLIRAIEWITRSWHSVSSERIFSSWKKTHLFNLLDWPSGNSGQLVYLNQKLNTFDENKSLKKLKEVMSYLNVVIPWEIDELVGLVNERGKVTLSYASIEEIIDSCLSEPVDDYDEMGDDDGRFDNRKNELGDVSSVPVDNSNDPWFTVSEINEFHNDPFYNNDKSIDAAAEPLESISPDNDSSAIPGLETKALSAISGLGTTSTSVVSDSPSGTTQKYNNISTYPNGSLKHKLGVLENWNRKRGPGQGQGQGQELQNPQGQQQQEQQQQQQHQMSGYNFSPISNIESPIASGGLTNPNVQFGNGAGSFDNQTPLFMNSLTSPPPPPPVPVPVPVPVPSVPSQVPATSFPQDVSSSRAVRAPMSTAAVDVDMATAITKLLEYSASNTLKLSQSTIDDLDYNLRVIRARLNQR</sequence>
<feature type="chain" id="PRO_0000126136" description="Protein PDC2">
    <location>
        <begin position="1"/>
        <end position="836"/>
    </location>
</feature>
<feature type="domain" description="HTH CENPB-type" evidence="2">
    <location>
        <begin position="64"/>
        <end position="139"/>
    </location>
</feature>
<feature type="region of interest" description="Disordered" evidence="3">
    <location>
        <begin position="626"/>
        <end position="732"/>
    </location>
</feature>
<feature type="compositionally biased region" description="Low complexity" evidence="3">
    <location>
        <begin position="626"/>
        <end position="640"/>
    </location>
</feature>
<feature type="compositionally biased region" description="Polar residues" evidence="3">
    <location>
        <begin position="641"/>
        <end position="651"/>
    </location>
</feature>
<feature type="compositionally biased region" description="Low complexity" evidence="3">
    <location>
        <begin position="677"/>
        <end position="698"/>
    </location>
</feature>
<feature type="compositionally biased region" description="Polar residues" evidence="3">
    <location>
        <begin position="699"/>
        <end position="711"/>
    </location>
</feature>
<comment type="function">
    <text evidence="1">Essential for the synthesis of pyruvate decarboxylase.</text>
</comment>
<reference key="1">
    <citation type="journal article" date="1999" name="Yeast">
        <title>Identification of a gene encoding the pyruvate decarboxylase gene regulator CaPdc2p from Candida albicans.</title>
        <authorList>
            <person name="Kaiser B."/>
            <person name="Munder T."/>
            <person name="Saluz H.P."/>
            <person name="Kuenkel W."/>
            <person name="Eck R."/>
        </authorList>
    </citation>
    <scope>NUCLEOTIDE SEQUENCE [GENOMIC DNA]</scope>
</reference>
<name>PDC2_CANAX</name>
<keyword id="KW-0238">DNA-binding</keyword>
<proteinExistence type="inferred from homology"/>
<protein>
    <recommendedName>
        <fullName>Protein PDC2</fullName>
    </recommendedName>
</protein>